<dbReference type="EC" id="1.7.-.-" evidence="1"/>
<dbReference type="EC" id="1.11.1.-" evidence="1"/>
<dbReference type="PIR" id="A02505">
    <property type="entry name" value="MYWHU"/>
</dbReference>
<dbReference type="SMR" id="P02183"/>
<dbReference type="GO" id="GO:0070062">
    <property type="term" value="C:extracellular exosome"/>
    <property type="evidence" value="ECO:0007669"/>
    <property type="project" value="TreeGrafter"/>
</dbReference>
<dbReference type="GO" id="GO:0016528">
    <property type="term" value="C:sarcoplasm"/>
    <property type="evidence" value="ECO:0000250"/>
    <property type="project" value="UniProtKB"/>
</dbReference>
<dbReference type="GO" id="GO:0020037">
    <property type="term" value="F:heme binding"/>
    <property type="evidence" value="ECO:0007669"/>
    <property type="project" value="InterPro"/>
</dbReference>
<dbReference type="GO" id="GO:0046872">
    <property type="term" value="F:metal ion binding"/>
    <property type="evidence" value="ECO:0007669"/>
    <property type="project" value="UniProtKB-KW"/>
</dbReference>
<dbReference type="GO" id="GO:0098809">
    <property type="term" value="F:nitrite reductase activity"/>
    <property type="evidence" value="ECO:0000250"/>
    <property type="project" value="UniProtKB"/>
</dbReference>
<dbReference type="GO" id="GO:0019825">
    <property type="term" value="F:oxygen binding"/>
    <property type="evidence" value="ECO:0007669"/>
    <property type="project" value="InterPro"/>
</dbReference>
<dbReference type="GO" id="GO:0005344">
    <property type="term" value="F:oxygen carrier activity"/>
    <property type="evidence" value="ECO:0000250"/>
    <property type="project" value="UniProtKB"/>
</dbReference>
<dbReference type="GO" id="GO:0004601">
    <property type="term" value="F:peroxidase activity"/>
    <property type="evidence" value="ECO:0000250"/>
    <property type="project" value="UniProtKB"/>
</dbReference>
<dbReference type="GO" id="GO:0019430">
    <property type="term" value="P:removal of superoxide radicals"/>
    <property type="evidence" value="ECO:0000250"/>
    <property type="project" value="UniProtKB"/>
</dbReference>
<dbReference type="Gene3D" id="6.10.140.2100">
    <property type="match status" value="1"/>
</dbReference>
<dbReference type="Gene3D" id="6.10.140.2110">
    <property type="match status" value="1"/>
</dbReference>
<dbReference type="InterPro" id="IPR000971">
    <property type="entry name" value="Globin"/>
</dbReference>
<dbReference type="InterPro" id="IPR009050">
    <property type="entry name" value="Globin-like_sf"/>
</dbReference>
<dbReference type="InterPro" id="IPR002335">
    <property type="entry name" value="Myoglobin"/>
</dbReference>
<dbReference type="PANTHER" id="PTHR47132">
    <property type="entry name" value="MYOGLOBIN"/>
    <property type="match status" value="1"/>
</dbReference>
<dbReference type="PANTHER" id="PTHR47132:SF1">
    <property type="entry name" value="MYOGLOBIN"/>
    <property type="match status" value="1"/>
</dbReference>
<dbReference type="Pfam" id="PF00042">
    <property type="entry name" value="Globin"/>
    <property type="match status" value="1"/>
</dbReference>
<dbReference type="PRINTS" id="PR00613">
    <property type="entry name" value="MYOGLOBIN"/>
</dbReference>
<dbReference type="SUPFAM" id="SSF46458">
    <property type="entry name" value="Globin-like"/>
    <property type="match status" value="1"/>
</dbReference>
<dbReference type="PROSITE" id="PS01033">
    <property type="entry name" value="GLOBIN"/>
    <property type="match status" value="1"/>
</dbReference>
<protein>
    <recommendedName>
        <fullName>Myoglobin</fullName>
    </recommendedName>
    <alternativeName>
        <fullName evidence="1">Nitrite reductase MB</fullName>
        <ecNumber evidence="1">1.7.-.-</ecNumber>
    </alternativeName>
    <alternativeName>
        <fullName evidence="1">Pseudoperoxidase MB</fullName>
        <ecNumber evidence="1">1.11.1.-</ecNumber>
    </alternativeName>
</protein>
<evidence type="ECO:0000250" key="1">
    <source>
        <dbReference type="UniProtKB" id="P02144"/>
    </source>
</evidence>
<evidence type="ECO:0000250" key="2">
    <source>
        <dbReference type="UniProtKB" id="P02185"/>
    </source>
</evidence>
<evidence type="ECO:0000250" key="3">
    <source>
        <dbReference type="UniProtKB" id="P02189"/>
    </source>
</evidence>
<evidence type="ECO:0000250" key="4">
    <source>
        <dbReference type="UniProtKB" id="P04247"/>
    </source>
</evidence>
<evidence type="ECO:0000250" key="5">
    <source>
        <dbReference type="UniProtKB" id="P68082"/>
    </source>
</evidence>
<evidence type="ECO:0000250" key="6">
    <source>
        <dbReference type="UniProtKB" id="Q9QZ76"/>
    </source>
</evidence>
<evidence type="ECO:0000255" key="7">
    <source>
        <dbReference type="PROSITE-ProRule" id="PRU00238"/>
    </source>
</evidence>
<evidence type="ECO:0000269" key="8">
    <source>
    </source>
</evidence>
<name>MYG_MESCA</name>
<feature type="initiator methionine" description="Removed" evidence="8">
    <location>
        <position position="1"/>
    </location>
</feature>
<feature type="chain" id="PRO_0000053318" description="Myoglobin">
    <location>
        <begin position="2"/>
        <end position="154"/>
    </location>
</feature>
<feature type="domain" description="Globin" evidence="7">
    <location>
        <begin position="2"/>
        <end position="148"/>
    </location>
</feature>
<feature type="binding site" evidence="5">
    <location>
        <position position="65"/>
    </location>
    <ligand>
        <name>nitrite</name>
        <dbReference type="ChEBI" id="CHEBI:16301"/>
    </ligand>
</feature>
<feature type="binding site" evidence="3 7">
    <location>
        <position position="65"/>
    </location>
    <ligand>
        <name>O2</name>
        <dbReference type="ChEBI" id="CHEBI:15379"/>
    </ligand>
</feature>
<feature type="binding site" description="proximal binding residue" evidence="1">
    <location>
        <position position="94"/>
    </location>
    <ligand>
        <name>heme b</name>
        <dbReference type="ChEBI" id="CHEBI:60344"/>
    </ligand>
    <ligandPart>
        <name>Fe</name>
        <dbReference type="ChEBI" id="CHEBI:18248"/>
    </ligandPart>
</feature>
<feature type="modified residue" description="Phosphoserine" evidence="6">
    <location>
        <position position="4"/>
    </location>
</feature>
<feature type="modified residue" description="Phosphothreonine" evidence="4">
    <location>
        <position position="68"/>
    </location>
</feature>
<keyword id="KW-0963">Cytoplasm</keyword>
<keyword id="KW-0903">Direct protein sequencing</keyword>
<keyword id="KW-0349">Heme</keyword>
<keyword id="KW-0408">Iron</keyword>
<keyword id="KW-0479">Metal-binding</keyword>
<keyword id="KW-0514">Muscle protein</keyword>
<keyword id="KW-0560">Oxidoreductase</keyword>
<keyword id="KW-0561">Oxygen transport</keyword>
<keyword id="KW-0597">Phosphoprotein</keyword>
<keyword id="KW-0813">Transport</keyword>
<proteinExistence type="evidence at protein level"/>
<organism>
    <name type="scientific">Mesoplodon carlhubbsi</name>
    <name type="common">Hubb's beaked whale</name>
    <dbReference type="NCBI Taxonomy" id="9758"/>
    <lineage>
        <taxon>Eukaryota</taxon>
        <taxon>Metazoa</taxon>
        <taxon>Chordata</taxon>
        <taxon>Craniata</taxon>
        <taxon>Vertebrata</taxon>
        <taxon>Euteleostomi</taxon>
        <taxon>Mammalia</taxon>
        <taxon>Eutheria</taxon>
        <taxon>Laurasiatheria</taxon>
        <taxon>Artiodactyla</taxon>
        <taxon>Whippomorpha</taxon>
        <taxon>Cetacea</taxon>
        <taxon>Odontoceti</taxon>
        <taxon>Ziphiidae</taxon>
        <taxon>Mesoplodon</taxon>
    </lineage>
</organism>
<sequence length="154" mass="17267">MGLSEAEWQLVLHVWAKVEADLSGHGQEILIRLFKGHPETLEKFDKFKHLKSEAEMKASEDLKKHGHTVLTALGGILKKKGHHEAELKPLAQSHATKHKIPIKYLEFISDAIIHVLHSKHPSDFGADAQGAMTKALELFRKDIAAKYKELGFHG</sequence>
<accession>P02183</accession>
<reference key="1">
    <citation type="journal article" date="1980" name="Biochim. Biophys. Acta">
        <title>Complete amino acid sequence of the major component myoglobin from Hubb's beaked whale, Mesoplodon carlhubbsi.</title>
        <authorList>
            <person name="Dwulet J.A."/>
            <person name="Dwulet F.E."/>
            <person name="Gurd F.R.N."/>
        </authorList>
    </citation>
    <scope>PROTEIN SEQUENCE OF 2-154</scope>
    <source>
        <tissue>Skeletal muscle</tissue>
    </source>
</reference>
<gene>
    <name type="primary">MB</name>
</gene>
<comment type="function">
    <text evidence="1">Monomeric heme protein which primary function is to store oxygen and facilitate its diffusion within muscle tissues. Reversibly binds oxygen through a pentacoordinated heme iron and enables its timely and efficient release as needed during periods of heightened demand. Depending on the oxidative conditions of tissues and cells, and in addition to its ability to bind oxygen, it also has a nitrite reductase activity whereby it regulates the production of bioactive nitric oxide. Under stress conditions, like hypoxia and anoxia, it also protects cells against reactive oxygen species thanks to its pseudoperoxidase activity.</text>
</comment>
<comment type="catalytic activity">
    <reaction evidence="1">
        <text>Fe(III)-heme b-[protein] + nitric oxide + H2O = Fe(II)-heme b-[protein] + nitrite + 2 H(+)</text>
        <dbReference type="Rhea" id="RHEA:77711"/>
        <dbReference type="Rhea" id="RHEA-COMP:18975"/>
        <dbReference type="Rhea" id="RHEA-COMP:18976"/>
        <dbReference type="ChEBI" id="CHEBI:15377"/>
        <dbReference type="ChEBI" id="CHEBI:15378"/>
        <dbReference type="ChEBI" id="CHEBI:16301"/>
        <dbReference type="ChEBI" id="CHEBI:16480"/>
        <dbReference type="ChEBI" id="CHEBI:55376"/>
        <dbReference type="ChEBI" id="CHEBI:60344"/>
    </reaction>
    <physiologicalReaction direction="right-to-left" evidence="1">
        <dbReference type="Rhea" id="RHEA:77713"/>
    </physiologicalReaction>
</comment>
<comment type="catalytic activity">
    <reaction evidence="1">
        <text>H2O2 + AH2 = A + 2 H2O</text>
        <dbReference type="Rhea" id="RHEA:30275"/>
        <dbReference type="ChEBI" id="CHEBI:13193"/>
        <dbReference type="ChEBI" id="CHEBI:15377"/>
        <dbReference type="ChEBI" id="CHEBI:16240"/>
        <dbReference type="ChEBI" id="CHEBI:17499"/>
    </reaction>
</comment>
<comment type="subunit">
    <text evidence="2">Monomeric.</text>
</comment>
<comment type="subcellular location">
    <subcellularLocation>
        <location evidence="1">Cytoplasm</location>
        <location evidence="1">Sarcoplasm</location>
    </subcellularLocation>
</comment>
<comment type="similarity">
    <text evidence="7">Belongs to the globin family.</text>
</comment>